<proteinExistence type="inferred from homology"/>
<accession>P15704</accession>
<evidence type="ECO:0000250" key="1">
    <source>
        <dbReference type="UniProtKB" id="O85465"/>
    </source>
</evidence>
<evidence type="ECO:0000305" key="2"/>
<evidence type="ECO:0000305" key="3">
    <source>
    </source>
</evidence>
<name>GUN_CLOSA</name>
<protein>
    <recommendedName>
        <fullName>Endoglucanase</fullName>
        <ecNumber>3.2.1.4</ecNumber>
    </recommendedName>
    <alternativeName>
        <fullName>Cellulase</fullName>
    </alternativeName>
    <alternativeName>
        <fullName>Endo-1,4-beta-glucanase</fullName>
    </alternativeName>
</protein>
<gene>
    <name type="primary">eglA</name>
</gene>
<feature type="signal peptide">
    <location>
        <begin position="1"/>
        <end position="34"/>
    </location>
</feature>
<feature type="chain" id="PRO_0000007844" description="Endoglucanase">
    <location>
        <begin position="35"/>
        <end position="448"/>
    </location>
</feature>
<feature type="active site" description="Proton donor" evidence="1">
    <location>
        <position position="175"/>
    </location>
</feature>
<feature type="active site" description="Nucleophile" evidence="1">
    <location>
        <position position="263"/>
    </location>
</feature>
<feature type="binding site" evidence="1">
    <location>
        <position position="70"/>
    </location>
    <ligand>
        <name>substrate</name>
    </ligand>
</feature>
<feature type="binding site" evidence="1">
    <location>
        <begin position="74"/>
        <end position="75"/>
    </location>
    <ligand>
        <name>substrate</name>
    </ligand>
</feature>
<feature type="binding site" evidence="1">
    <location>
        <position position="101"/>
    </location>
    <ligand>
        <name>substrate</name>
    </ligand>
</feature>
<feature type="binding site" evidence="1">
    <location>
        <position position="137"/>
    </location>
    <ligand>
        <name>substrate</name>
    </ligand>
</feature>
<feature type="binding site" evidence="1">
    <location>
        <position position="237"/>
    </location>
    <ligand>
        <name>substrate</name>
    </ligand>
</feature>
<feature type="binding site" evidence="1">
    <location>
        <begin position="269"/>
        <end position="270"/>
    </location>
    <ligand>
        <name>substrate</name>
    </ligand>
</feature>
<feature type="binding site" evidence="1">
    <location>
        <position position="297"/>
    </location>
    <ligand>
        <name>substrate</name>
    </ligand>
</feature>
<feature type="binding site" evidence="1">
    <location>
        <begin position="302"/>
        <end position="304"/>
    </location>
    <ligand>
        <name>substrate</name>
    </ligand>
</feature>
<organism>
    <name type="scientific">Clostridium saccharobutylicum</name>
    <dbReference type="NCBI Taxonomy" id="169679"/>
    <lineage>
        <taxon>Bacteria</taxon>
        <taxon>Bacillati</taxon>
        <taxon>Bacillota</taxon>
        <taxon>Clostridia</taxon>
        <taxon>Eubacteriales</taxon>
        <taxon>Clostridiaceae</taxon>
        <taxon>Clostridium</taxon>
    </lineage>
</organism>
<sequence>MFSKIKKINFFKKTFSFLIAVVMMLFTVLGTNTYKAEAATTSFGGQLKVVGSQLCDSNGKPIQLKGMSSHGLQWYVNFVNYDSMKFLRDKWGVNVIRAAMYTNEGGYISNPSSQKEKIKKIVQDAIDLNMYVIIDWHILSDNNPNTYKEQAKSFFQEMAEEYGKYSNVIYEICNEPNGGTNWANDIKPYANYIIPAIRAIDPNNIIIVGTSTWSQDVDIAADNPLRYSNIMYTCHFYAGTHTQSLRDKINYAMSKGIAIFVTEWGTSDASGNGGPYLDESQKWVDFMASKNISWTNWALCDKSEASAALKSGSSTTGGWTDSDLTTSGLFVKKSIGGSNTTSQTSAPTFSLQSGTYDSAQTVTLTSSDNDSVIHYTTDGTTPTSSSPVYTSPITISKTTTVKAFTTKTGMTDSNITSAVYTISNTDPVKQVSAPTFSYNQEHTIQLKL</sequence>
<keyword id="KW-0119">Carbohydrate metabolism</keyword>
<keyword id="KW-0136">Cellulose degradation</keyword>
<keyword id="KW-0326">Glycosidase</keyword>
<keyword id="KW-0378">Hydrolase</keyword>
<keyword id="KW-0624">Polysaccharide degradation</keyword>
<keyword id="KW-0732">Signal</keyword>
<dbReference type="EC" id="3.2.1.4"/>
<dbReference type="EMBL" id="M31311">
    <property type="protein sequence ID" value="AAA23230.1"/>
    <property type="molecule type" value="Genomic_DNA"/>
</dbReference>
<dbReference type="SMR" id="P15704"/>
<dbReference type="STRING" id="169679.CSACC_09830"/>
<dbReference type="CAZy" id="GH5">
    <property type="family name" value="Glycoside Hydrolase Family 5"/>
</dbReference>
<dbReference type="GO" id="GO:0008810">
    <property type="term" value="F:cellulase activity"/>
    <property type="evidence" value="ECO:0007669"/>
    <property type="project" value="UniProtKB-EC"/>
</dbReference>
<dbReference type="GO" id="GO:0030245">
    <property type="term" value="P:cellulose catabolic process"/>
    <property type="evidence" value="ECO:0007669"/>
    <property type="project" value="UniProtKB-KW"/>
</dbReference>
<dbReference type="Gene3D" id="3.20.20.80">
    <property type="entry name" value="Glycosidases"/>
    <property type="match status" value="1"/>
</dbReference>
<dbReference type="InterPro" id="IPR001547">
    <property type="entry name" value="Glyco_hydro_5"/>
</dbReference>
<dbReference type="InterPro" id="IPR018087">
    <property type="entry name" value="Glyco_hydro_5_CS"/>
</dbReference>
<dbReference type="InterPro" id="IPR017853">
    <property type="entry name" value="Glycoside_hydrolase_SF"/>
</dbReference>
<dbReference type="PANTHER" id="PTHR34142">
    <property type="entry name" value="ENDO-BETA-1,4-GLUCANASE A"/>
    <property type="match status" value="1"/>
</dbReference>
<dbReference type="PANTHER" id="PTHR34142:SF1">
    <property type="entry name" value="GLYCOSIDE HYDROLASE FAMILY 5 DOMAIN-CONTAINING PROTEIN"/>
    <property type="match status" value="1"/>
</dbReference>
<dbReference type="Pfam" id="PF00150">
    <property type="entry name" value="Cellulase"/>
    <property type="match status" value="1"/>
</dbReference>
<dbReference type="Pfam" id="PF13290">
    <property type="entry name" value="CHB_HEX_C_1"/>
    <property type="match status" value="1"/>
</dbReference>
<dbReference type="SUPFAM" id="SSF51445">
    <property type="entry name" value="(Trans)glycosidases"/>
    <property type="match status" value="1"/>
</dbReference>
<dbReference type="PROSITE" id="PS00659">
    <property type="entry name" value="GLYCOSYL_HYDROL_F5"/>
    <property type="match status" value="1"/>
</dbReference>
<comment type="catalytic activity">
    <reaction>
        <text>Endohydrolysis of (1-&gt;4)-beta-D-glucosidic linkages in cellulose, lichenin and cereal beta-D-glucans.</text>
        <dbReference type="EC" id="3.2.1.4"/>
    </reaction>
</comment>
<comment type="miscellaneous">
    <text>The C-terminal region of C.acetobutylicum is not required for activity.</text>
</comment>
<comment type="similarity">
    <text evidence="2">Belongs to the glycosyl hydrolase 5 (cellulase A) family.</text>
</comment>
<comment type="caution">
    <text evidence="3">Was originally thought to originate from C.acetobutylicum.</text>
</comment>
<reference key="1">
    <citation type="journal article" date="1988" name="Appl. Environ. Microbiol.">
        <title>Structure of an endo-beta-1,4-glucanase gene from Clostridium acetobutylicum P262 showing homology with endoglucanase genes from Bacillus spp.</title>
        <authorList>
            <person name="Zappe H."/>
            <person name="Jones W.A."/>
            <person name="Jones D.T."/>
            <person name="Woods D.R."/>
        </authorList>
    </citation>
    <scope>NUCLEOTIDE SEQUENCE [GENOMIC DNA]</scope>
    <source>
        <strain>ATCC BAA-117 / DSM 13864 / NCP 262</strain>
    </source>
</reference>